<reference key="1">
    <citation type="journal article" date="1992" name="J. Gen. Microbiol.">
        <title>Sequencing and analysis of the Bacillus subtilis lytRABC divergon: a regulatory unit encompassing the structural genes of the N-acetylmuramoyl-L-alanine amidase and its modifier.</title>
        <authorList>
            <person name="Lazarevic V."/>
            <person name="Margot P."/>
            <person name="Soldo B."/>
            <person name="Karamata D."/>
        </authorList>
    </citation>
    <scope>NUCLEOTIDE SEQUENCE [GENOMIC DNA]</scope>
    <scope>REPRESSION BY LYTR</scope>
    <source>
        <strain>168</strain>
    </source>
</reference>
<reference key="2">
    <citation type="journal article" date="1991" name="J. Bacteriol.">
        <title>Molecular cloning and sequencing of a major Bacillus subtilis autolysin gene.</title>
        <authorList>
            <person name="Kuroda A."/>
            <person name="Sekiguchi J."/>
        </authorList>
    </citation>
    <scope>NUCLEOTIDE SEQUENCE [GENOMIC DNA]</scope>
    <scope>PROTEIN SEQUENCE OF 25-44 AND 297-309</scope>
    <scope>FUNCTION</scope>
    <scope>CATALYTIC ACTIVITY</scope>
    <scope>DISRUPTION PHENOTYPE</scope>
    <scope>SUBCELLULAR LOCATION</scope>
    <source>
        <strain>168</strain>
    </source>
</reference>
<reference key="3">
    <citation type="journal article" date="1997" name="Nature">
        <title>The complete genome sequence of the Gram-positive bacterium Bacillus subtilis.</title>
        <authorList>
            <person name="Kunst F."/>
            <person name="Ogasawara N."/>
            <person name="Moszer I."/>
            <person name="Albertini A.M."/>
            <person name="Alloni G."/>
            <person name="Azevedo V."/>
            <person name="Bertero M.G."/>
            <person name="Bessieres P."/>
            <person name="Bolotin A."/>
            <person name="Borchert S."/>
            <person name="Borriss R."/>
            <person name="Boursier L."/>
            <person name="Brans A."/>
            <person name="Braun M."/>
            <person name="Brignell S.C."/>
            <person name="Bron S."/>
            <person name="Brouillet S."/>
            <person name="Bruschi C.V."/>
            <person name="Caldwell B."/>
            <person name="Capuano V."/>
            <person name="Carter N.M."/>
            <person name="Choi S.-K."/>
            <person name="Codani J.-J."/>
            <person name="Connerton I.F."/>
            <person name="Cummings N.J."/>
            <person name="Daniel R.A."/>
            <person name="Denizot F."/>
            <person name="Devine K.M."/>
            <person name="Duesterhoeft A."/>
            <person name="Ehrlich S.D."/>
            <person name="Emmerson P.T."/>
            <person name="Entian K.-D."/>
            <person name="Errington J."/>
            <person name="Fabret C."/>
            <person name="Ferrari E."/>
            <person name="Foulger D."/>
            <person name="Fritz C."/>
            <person name="Fujita M."/>
            <person name="Fujita Y."/>
            <person name="Fuma S."/>
            <person name="Galizzi A."/>
            <person name="Galleron N."/>
            <person name="Ghim S.-Y."/>
            <person name="Glaser P."/>
            <person name="Goffeau A."/>
            <person name="Golightly E.J."/>
            <person name="Grandi G."/>
            <person name="Guiseppi G."/>
            <person name="Guy B.J."/>
            <person name="Haga K."/>
            <person name="Haiech J."/>
            <person name="Harwood C.R."/>
            <person name="Henaut A."/>
            <person name="Hilbert H."/>
            <person name="Holsappel S."/>
            <person name="Hosono S."/>
            <person name="Hullo M.-F."/>
            <person name="Itaya M."/>
            <person name="Jones L.-M."/>
            <person name="Joris B."/>
            <person name="Karamata D."/>
            <person name="Kasahara Y."/>
            <person name="Klaerr-Blanchard M."/>
            <person name="Klein C."/>
            <person name="Kobayashi Y."/>
            <person name="Koetter P."/>
            <person name="Koningstein G."/>
            <person name="Krogh S."/>
            <person name="Kumano M."/>
            <person name="Kurita K."/>
            <person name="Lapidus A."/>
            <person name="Lardinois S."/>
            <person name="Lauber J."/>
            <person name="Lazarevic V."/>
            <person name="Lee S.-M."/>
            <person name="Levine A."/>
            <person name="Liu H."/>
            <person name="Masuda S."/>
            <person name="Mauel C."/>
            <person name="Medigue C."/>
            <person name="Medina N."/>
            <person name="Mellado R.P."/>
            <person name="Mizuno M."/>
            <person name="Moestl D."/>
            <person name="Nakai S."/>
            <person name="Noback M."/>
            <person name="Noone D."/>
            <person name="O'Reilly M."/>
            <person name="Ogawa K."/>
            <person name="Ogiwara A."/>
            <person name="Oudega B."/>
            <person name="Park S.-H."/>
            <person name="Parro V."/>
            <person name="Pohl T.M."/>
            <person name="Portetelle D."/>
            <person name="Porwollik S."/>
            <person name="Prescott A.M."/>
            <person name="Presecan E."/>
            <person name="Pujic P."/>
            <person name="Purnelle B."/>
            <person name="Rapoport G."/>
            <person name="Rey M."/>
            <person name="Reynolds S."/>
            <person name="Rieger M."/>
            <person name="Rivolta C."/>
            <person name="Rocha E."/>
            <person name="Roche B."/>
            <person name="Rose M."/>
            <person name="Sadaie Y."/>
            <person name="Sato T."/>
            <person name="Scanlan E."/>
            <person name="Schleich S."/>
            <person name="Schroeter R."/>
            <person name="Scoffone F."/>
            <person name="Sekiguchi J."/>
            <person name="Sekowska A."/>
            <person name="Seror S.J."/>
            <person name="Serror P."/>
            <person name="Shin B.-S."/>
            <person name="Soldo B."/>
            <person name="Sorokin A."/>
            <person name="Tacconi E."/>
            <person name="Takagi T."/>
            <person name="Takahashi H."/>
            <person name="Takemaru K."/>
            <person name="Takeuchi M."/>
            <person name="Tamakoshi A."/>
            <person name="Tanaka T."/>
            <person name="Terpstra P."/>
            <person name="Tognoni A."/>
            <person name="Tosato V."/>
            <person name="Uchiyama S."/>
            <person name="Vandenbol M."/>
            <person name="Vannier F."/>
            <person name="Vassarotti A."/>
            <person name="Viari A."/>
            <person name="Wambutt R."/>
            <person name="Wedler E."/>
            <person name="Wedler H."/>
            <person name="Weitzenegger T."/>
            <person name="Winters P."/>
            <person name="Wipat A."/>
            <person name="Yamamoto H."/>
            <person name="Yamane K."/>
            <person name="Yasumoto K."/>
            <person name="Yata K."/>
            <person name="Yoshida K."/>
            <person name="Yoshikawa H.-F."/>
            <person name="Zumstein E."/>
            <person name="Yoshikawa H."/>
            <person name="Danchin A."/>
        </authorList>
    </citation>
    <scope>NUCLEOTIDE SEQUENCE [LARGE SCALE GENOMIC DNA]</scope>
    <source>
        <strain>168</strain>
    </source>
</reference>
<reference key="4">
    <citation type="journal article" date="2002" name="Proteomics">
        <title>Stabilization of cell wall proteins in Bacillus subtilis: a proteomic approach.</title>
        <authorList>
            <person name="Antelmann H."/>
            <person name="Yamamoto H."/>
            <person name="Sekiguchi J."/>
            <person name="Hecker M."/>
        </authorList>
    </citation>
    <scope>PROTEIN SEQUENCE OF N-TERMINUS</scope>
    <scope>IDENTIFICATION BY MASS SPECTROMETRY</scope>
    <scope>SUBCELLULAR LOCATION</scope>
    <scope>INDUCTION</scope>
    <source>
        <strain>168</strain>
    </source>
</reference>
<reference key="5">
    <citation type="journal article" date="1993" name="FEMS Microbiol. Lett.">
        <title>Bacillus subtilis mutant deficient in the major autolytic amidase and glucosaminidase is impaired in motility.</title>
        <authorList>
            <person name="Rashid M.H."/>
            <person name="Kuroda A."/>
            <person name="Sekiguchi J."/>
        </authorList>
    </citation>
    <scope>DISRUPTION PHENOTYPE</scope>
    <source>
        <strain>168 / AC327</strain>
    </source>
</reference>
<reference key="6">
    <citation type="journal article" date="1993" name="J. Bacteriol.">
        <title>High-level transcription of the major Bacillus subtilis autolysin operon depends on expression of the sigma D gene and is affected by a sin (flaD) mutation.</title>
        <authorList>
            <person name="Kuroda A."/>
            <person name="Sekiguchi J."/>
        </authorList>
    </citation>
    <scope>INDUCTION</scope>
    <source>
        <strain>168 / AC327</strain>
    </source>
</reference>
<reference key="7">
    <citation type="journal article" date="2003" name="J. Bacteriol.">
        <title>Localization of the vegetative cell wall hydrolases LytC, LytE, and LytF on the Bacillus subtilis cell surface and stability of these enzymes to cell wall-bound or extracellular proteases.</title>
        <authorList>
            <person name="Yamamoto H."/>
            <person name="Kurosawa S."/>
            <person name="Sekiguchi J."/>
        </authorList>
    </citation>
    <scope>SUBCELLULAR LOCATION</scope>
    <source>
        <strain>168</strain>
    </source>
</reference>
<reference key="8">
    <citation type="journal article" date="2005" name="Biosci. Biotechnol. Biochem.">
        <title>Functional analysis of the YvrGHb two-component system of Bacillus subtilis: identification of the regulated genes by DNA microarray and northern blot analyses.</title>
        <authorList>
            <person name="Serizawa M."/>
            <person name="Kodama K."/>
            <person name="Yamamoto H."/>
            <person name="Kobayashi K."/>
            <person name="Ogasawara N."/>
            <person name="Sekiguchi J."/>
        </authorList>
    </citation>
    <scope>REPRESSION BY YVRH</scope>
    <source>
        <strain>168</strain>
    </source>
</reference>
<reference key="9">
    <citation type="journal article" date="2009" name="J. Bacteriol.">
        <title>Role of the sigmaD-dependent autolysins in Bacillus subtilis population heterogeneity.</title>
        <authorList>
            <person name="Chen R."/>
            <person name="Guttenplan S.B."/>
            <person name="Blair K.M."/>
            <person name="Kearns D.B."/>
        </authorList>
    </citation>
    <scope>FUNCTION IN SWARMING MOTILITY</scope>
    <scope>DISRUPTION PHENOTYPE</scope>
    <source>
        <strain>168 / PY79</strain>
        <strain>3610</strain>
    </source>
</reference>
<sequence length="496" mass="52626">MRSYIKVLTMCFLGLILFVPTALADNSVKRVGGSNRYGTAVQISKQMYSTASTAVIVGGSSYADAISAAPLAYQKNAPLLYTNSDKLSYETKTRLKEMQTKNVIIVGGTPAVSSNTANQIKSLGISIKRIAGSNRYDTAARVAKAMGATSKAVILNGFLYADAPAVIPYAAKNGYPILFTNKTSINSATTSVIKDKGISSTVVVGGTGSISNTVYNKLPSPTRISGSNRYELAANIVQKLNLSTSTVYVSNGFSYPDSIAGATLAAKKKQSLILTNGENLSTGARKIIGSKNMSNFMIIGNTPAVSTKVANQLKNPVVGETIFIDPGHGDQDSGAIGNGLLEKEVNLDIAKRVNTKLNASGALPVLSRSNDTFYSLQERVNKAASAQADLFLSIHANANDSSSPNGSETYYDTTYQAANSKRLAEQIQPKLAANLGTRDRGVKTAAFYVIKYSKMPSVLVETAFITNASDASKLKQAVYKDKAAQAIHDGTVSYYR</sequence>
<name>LYTC_BACSU</name>
<proteinExistence type="evidence at protein level"/>
<accession>Q02114</accession>
<gene>
    <name type="primary">lytC</name>
    <name type="synonym">cwlB</name>
    <name type="ordered locus">BSU35620</name>
</gene>
<comment type="function">
    <text evidence="6 7">Autolysins are cell wall hydrolases involved in some important biological processes such as cell separation, cell-wall turnover, competence for genetic transformation, formation of the flagella - in particular of its basal body - and sporulation. Has a high affinity for teichoic acid-endowed peptidoglycan. LytC is required for efficient swarming motility but not at the level of cell separation or flagellum biosynthesis. Rather, LytC appears to be important for proper flagellar function.</text>
</comment>
<comment type="catalytic activity">
    <reaction evidence="6">
        <text>Hydrolyzes the link between N-acetylmuramoyl residues and L-amino acid residues in certain cell-wall glycopeptides.</text>
        <dbReference type="EC" id="3.5.1.28"/>
    </reaction>
</comment>
<comment type="subcellular location">
    <subcellularLocation>
        <location evidence="2 4 6">Secreted</location>
        <location evidence="2 4 6">Cell wall</location>
    </subcellularLocation>
    <text>LytC localizes uniformly to the cell wall, into which the peritrichous flagella are randomly inserted.</text>
</comment>
<comment type="induction">
    <text evidence="2 3 5 8">Expressed under the control of SigD (major), the transcripts being predominants at the exponential growth phase, and SigA (minor). Repressed by LytR and YvrH.</text>
</comment>
<comment type="disruption phenotype">
    <text evidence="6 7 9">Inactivation of this gene leads to an approximately 90% decrease in the total cell wall hydrolytic activity of stationary-phase cells and extraordinary resistance to cell lysis, even after 6 days of incubation at 37 degrees Celsius. Cells from domesticated laboratory strains lacking this gene show no motility changes on swarm plates; however in combination with an acetylglucosaminidase deletion (lytD, AC P39848) greatly reduced motility is seen. They also show no apparent changes in cell morphology, competence, sporulation, or germination. Cells from an undomesticated strain (3610) lacking this gene show a reduction in the rate of swarming motility.</text>
</comment>
<comment type="similarity">
    <text evidence="10">Belongs to the N-acetylmuramoyl-L-alanine amidase 3 family.</text>
</comment>
<keyword id="KW-0134">Cell wall</keyword>
<keyword id="KW-0961">Cell wall biogenesis/degradation</keyword>
<keyword id="KW-0903">Direct protein sequencing</keyword>
<keyword id="KW-0378">Hydrolase</keyword>
<keyword id="KW-1185">Reference proteome</keyword>
<keyword id="KW-0677">Repeat</keyword>
<keyword id="KW-0964">Secreted</keyword>
<keyword id="KW-0732">Signal</keyword>
<protein>
    <recommendedName>
        <fullName>N-acetylmuramoyl-L-alanine amidase LytC</fullName>
        <ecNumber>3.5.1.28</ecNumber>
    </recommendedName>
    <alternativeName>
        <fullName>Cell wall-associated polypeptide CWBP49</fullName>
        <shortName>CWBP49</shortName>
    </alternativeName>
    <alternativeName>
        <fullName>Major autolysin</fullName>
    </alternativeName>
    <alternativeName>
        <fullName>Vegetative cell wall hydrolase LytC</fullName>
    </alternativeName>
</protein>
<evidence type="ECO:0000255" key="1"/>
<evidence type="ECO:0000269" key="2">
    <source>
    </source>
</evidence>
<evidence type="ECO:0000269" key="3">
    <source>
    </source>
</evidence>
<evidence type="ECO:0000269" key="4">
    <source>
    </source>
</evidence>
<evidence type="ECO:0000269" key="5">
    <source>
    </source>
</evidence>
<evidence type="ECO:0000269" key="6">
    <source>
    </source>
</evidence>
<evidence type="ECO:0000269" key="7">
    <source>
    </source>
</evidence>
<evidence type="ECO:0000269" key="8">
    <source>
    </source>
</evidence>
<evidence type="ECO:0000269" key="9">
    <source>
    </source>
</evidence>
<evidence type="ECO:0000305" key="10"/>
<organism>
    <name type="scientific">Bacillus subtilis (strain 168)</name>
    <dbReference type="NCBI Taxonomy" id="224308"/>
    <lineage>
        <taxon>Bacteria</taxon>
        <taxon>Bacillati</taxon>
        <taxon>Bacillota</taxon>
        <taxon>Bacilli</taxon>
        <taxon>Bacillales</taxon>
        <taxon>Bacillaceae</taxon>
        <taxon>Bacillus</taxon>
    </lineage>
</organism>
<feature type="signal peptide" evidence="2 6">
    <location>
        <begin position="1"/>
        <end position="24"/>
    </location>
</feature>
<feature type="chain" id="PRO_0000006459" description="N-acetylmuramoyl-L-alanine amidase LytC">
    <location>
        <begin position="25"/>
        <end position="496"/>
    </location>
</feature>
<feature type="repeat" description="1">
    <location>
        <begin position="30"/>
        <end position="128"/>
    </location>
</feature>
<feature type="repeat" description="2">
    <location>
        <begin position="129"/>
        <end position="222"/>
    </location>
</feature>
<feature type="repeat" description="3">
    <location>
        <begin position="223"/>
        <end position="318"/>
    </location>
</feature>
<feature type="domain" description="MurNAc-LAA" evidence="1">
    <location>
        <begin position="322"/>
        <end position="490"/>
    </location>
</feature>
<feature type="region of interest" description="3 X tandem repeats">
    <location>
        <begin position="30"/>
        <end position="318"/>
    </location>
</feature>
<dbReference type="EC" id="3.5.1.28"/>
<dbReference type="EMBL" id="M87645">
    <property type="protein sequence ID" value="AAA22581.1"/>
    <property type="molecule type" value="Genomic_DNA"/>
</dbReference>
<dbReference type="EMBL" id="M81324">
    <property type="protein sequence ID" value="AAA22371.1"/>
    <property type="molecule type" value="Genomic_DNA"/>
</dbReference>
<dbReference type="EMBL" id="D10388">
    <property type="protein sequence ID" value="BAA01225.1"/>
    <property type="molecule type" value="Genomic_DNA"/>
</dbReference>
<dbReference type="EMBL" id="AL009126">
    <property type="protein sequence ID" value="CAB15579.1"/>
    <property type="molecule type" value="Genomic_DNA"/>
</dbReference>
<dbReference type="PIR" id="B41322">
    <property type="entry name" value="B41322"/>
</dbReference>
<dbReference type="RefSeq" id="NP_391442.1">
    <property type="nucleotide sequence ID" value="NC_000964.3"/>
</dbReference>
<dbReference type="RefSeq" id="WP_003242758.1">
    <property type="nucleotide sequence ID" value="NZ_OZ025638.1"/>
</dbReference>
<dbReference type="SMR" id="Q02114"/>
<dbReference type="FunCoup" id="Q02114">
    <property type="interactions" value="57"/>
</dbReference>
<dbReference type="STRING" id="224308.BSU35620"/>
<dbReference type="jPOST" id="Q02114"/>
<dbReference type="PaxDb" id="224308-BSU35620"/>
<dbReference type="EnsemblBacteria" id="CAB15579">
    <property type="protein sequence ID" value="CAB15579"/>
    <property type="gene ID" value="BSU_35620"/>
</dbReference>
<dbReference type="GeneID" id="936777"/>
<dbReference type="KEGG" id="bsu:BSU35620"/>
<dbReference type="PATRIC" id="fig|224308.179.peg.3853"/>
<dbReference type="eggNOG" id="COG0860">
    <property type="taxonomic scope" value="Bacteria"/>
</dbReference>
<dbReference type="eggNOG" id="COG2247">
    <property type="taxonomic scope" value="Bacteria"/>
</dbReference>
<dbReference type="InParanoid" id="Q02114"/>
<dbReference type="OrthoDB" id="363232at2"/>
<dbReference type="PhylomeDB" id="Q02114"/>
<dbReference type="BioCyc" id="BSUB:BSU35620-MONOMER"/>
<dbReference type="Proteomes" id="UP000001570">
    <property type="component" value="Chromosome"/>
</dbReference>
<dbReference type="GO" id="GO:0005576">
    <property type="term" value="C:extracellular region"/>
    <property type="evidence" value="ECO:0007669"/>
    <property type="project" value="UniProtKB-KW"/>
</dbReference>
<dbReference type="GO" id="GO:0008745">
    <property type="term" value="F:N-acetylmuramoyl-L-alanine amidase activity"/>
    <property type="evidence" value="ECO:0007669"/>
    <property type="project" value="UniProtKB-EC"/>
</dbReference>
<dbReference type="GO" id="GO:0071555">
    <property type="term" value="P:cell wall organization"/>
    <property type="evidence" value="ECO:0007669"/>
    <property type="project" value="UniProtKB-KW"/>
</dbReference>
<dbReference type="GO" id="GO:0009253">
    <property type="term" value="P:peptidoglycan catabolic process"/>
    <property type="evidence" value="ECO:0007669"/>
    <property type="project" value="InterPro"/>
</dbReference>
<dbReference type="CDD" id="cd02696">
    <property type="entry name" value="MurNAc-LAA"/>
    <property type="match status" value="1"/>
</dbReference>
<dbReference type="Gene3D" id="3.40.50.12090">
    <property type="match status" value="2"/>
</dbReference>
<dbReference type="Gene3D" id="3.40.630.40">
    <property type="entry name" value="Zn-dependent exopeptidases"/>
    <property type="match status" value="1"/>
</dbReference>
<dbReference type="InterPro" id="IPR051922">
    <property type="entry name" value="Bact_Sporulation_Assoc"/>
</dbReference>
<dbReference type="InterPro" id="IPR007253">
    <property type="entry name" value="Cell_wall-bd_2"/>
</dbReference>
<dbReference type="InterPro" id="IPR002508">
    <property type="entry name" value="MurNAc-LAA_cat"/>
</dbReference>
<dbReference type="PANTHER" id="PTHR30032:SF1">
    <property type="entry name" value="N-ACETYLMURAMOYL-L-ALANINE AMIDASE LYTC"/>
    <property type="match status" value="1"/>
</dbReference>
<dbReference type="PANTHER" id="PTHR30032">
    <property type="entry name" value="N-ACETYLMURAMOYL-L-ALANINE AMIDASE-RELATED"/>
    <property type="match status" value="1"/>
</dbReference>
<dbReference type="Pfam" id="PF01520">
    <property type="entry name" value="Amidase_3"/>
    <property type="match status" value="1"/>
</dbReference>
<dbReference type="Pfam" id="PF04122">
    <property type="entry name" value="CW_binding_2"/>
    <property type="match status" value="3"/>
</dbReference>
<dbReference type="SMART" id="SM00646">
    <property type="entry name" value="Ami_3"/>
    <property type="match status" value="1"/>
</dbReference>
<dbReference type="SUPFAM" id="SSF53187">
    <property type="entry name" value="Zn-dependent exopeptidases"/>
    <property type="match status" value="1"/>
</dbReference>